<organism>
    <name type="scientific">Acidithiobacillus ferrooxidans (strain ATCC 53993 / BNL-5-31)</name>
    <name type="common">Leptospirillum ferrooxidans (ATCC 53993)</name>
    <dbReference type="NCBI Taxonomy" id="380394"/>
    <lineage>
        <taxon>Bacteria</taxon>
        <taxon>Pseudomonadati</taxon>
        <taxon>Pseudomonadota</taxon>
        <taxon>Acidithiobacillia</taxon>
        <taxon>Acidithiobacillales</taxon>
        <taxon>Acidithiobacillaceae</taxon>
        <taxon>Acidithiobacillus</taxon>
    </lineage>
</organism>
<comment type="function">
    <text evidence="1">Catalyzes the attachment of glutamate to tRNA(Glu) in a two-step reaction: glutamate is first activated by ATP to form Glu-AMP and then transferred to the acceptor end of tRNA(Glu).</text>
</comment>
<comment type="catalytic activity">
    <reaction evidence="1">
        <text>tRNA(Glu) + L-glutamate + ATP = L-glutamyl-tRNA(Glu) + AMP + diphosphate</text>
        <dbReference type="Rhea" id="RHEA:23540"/>
        <dbReference type="Rhea" id="RHEA-COMP:9663"/>
        <dbReference type="Rhea" id="RHEA-COMP:9680"/>
        <dbReference type="ChEBI" id="CHEBI:29985"/>
        <dbReference type="ChEBI" id="CHEBI:30616"/>
        <dbReference type="ChEBI" id="CHEBI:33019"/>
        <dbReference type="ChEBI" id="CHEBI:78442"/>
        <dbReference type="ChEBI" id="CHEBI:78520"/>
        <dbReference type="ChEBI" id="CHEBI:456215"/>
        <dbReference type="EC" id="6.1.1.17"/>
    </reaction>
</comment>
<comment type="cofactor">
    <cofactor evidence="1">
        <name>Zn(2+)</name>
        <dbReference type="ChEBI" id="CHEBI:29105"/>
    </cofactor>
    <text evidence="1">Binds 1 zinc ion per subunit.</text>
</comment>
<comment type="subunit">
    <text evidence="1">Monomer.</text>
</comment>
<comment type="subcellular location">
    <subcellularLocation>
        <location evidence="1">Cytoplasm</location>
    </subcellularLocation>
</comment>
<comment type="similarity">
    <text evidence="1">Belongs to the class-I aminoacyl-tRNA synthetase family. Glutamate--tRNA ligase type 1 subfamily.</text>
</comment>
<keyword id="KW-0030">Aminoacyl-tRNA synthetase</keyword>
<keyword id="KW-0067">ATP-binding</keyword>
<keyword id="KW-0963">Cytoplasm</keyword>
<keyword id="KW-0436">Ligase</keyword>
<keyword id="KW-0479">Metal-binding</keyword>
<keyword id="KW-0547">Nucleotide-binding</keyword>
<keyword id="KW-0648">Protein biosynthesis</keyword>
<keyword id="KW-0862">Zinc</keyword>
<protein>
    <recommendedName>
        <fullName evidence="1">Glutamate--tRNA ligase 2</fullName>
        <ecNumber evidence="1">6.1.1.17</ecNumber>
    </recommendedName>
    <alternativeName>
        <fullName evidence="1">Glutamyl-tRNA synthetase 2</fullName>
        <shortName evidence="1">GluRS 2</shortName>
    </alternativeName>
</protein>
<proteinExistence type="inferred from homology"/>
<dbReference type="EC" id="6.1.1.17" evidence="1"/>
<dbReference type="EMBL" id="CP001132">
    <property type="protein sequence ID" value="ACH84097.1"/>
    <property type="molecule type" value="Genomic_DNA"/>
</dbReference>
<dbReference type="SMR" id="B5EL11"/>
<dbReference type="KEGG" id="afe:Lferr_1876"/>
<dbReference type="eggNOG" id="COG0008">
    <property type="taxonomic scope" value="Bacteria"/>
</dbReference>
<dbReference type="HOGENOM" id="CLU_015768_6_3_6"/>
<dbReference type="GO" id="GO:0005829">
    <property type="term" value="C:cytosol"/>
    <property type="evidence" value="ECO:0007669"/>
    <property type="project" value="TreeGrafter"/>
</dbReference>
<dbReference type="GO" id="GO:0005524">
    <property type="term" value="F:ATP binding"/>
    <property type="evidence" value="ECO:0007669"/>
    <property type="project" value="UniProtKB-UniRule"/>
</dbReference>
<dbReference type="GO" id="GO:0004818">
    <property type="term" value="F:glutamate-tRNA ligase activity"/>
    <property type="evidence" value="ECO:0007669"/>
    <property type="project" value="UniProtKB-UniRule"/>
</dbReference>
<dbReference type="GO" id="GO:0000049">
    <property type="term" value="F:tRNA binding"/>
    <property type="evidence" value="ECO:0007669"/>
    <property type="project" value="InterPro"/>
</dbReference>
<dbReference type="GO" id="GO:0008270">
    <property type="term" value="F:zinc ion binding"/>
    <property type="evidence" value="ECO:0007669"/>
    <property type="project" value="UniProtKB-UniRule"/>
</dbReference>
<dbReference type="GO" id="GO:0006424">
    <property type="term" value="P:glutamyl-tRNA aminoacylation"/>
    <property type="evidence" value="ECO:0007669"/>
    <property type="project" value="UniProtKB-UniRule"/>
</dbReference>
<dbReference type="CDD" id="cd00808">
    <property type="entry name" value="GluRS_core"/>
    <property type="match status" value="1"/>
</dbReference>
<dbReference type="Gene3D" id="1.10.10.350">
    <property type="match status" value="1"/>
</dbReference>
<dbReference type="Gene3D" id="3.40.50.620">
    <property type="entry name" value="HUPs"/>
    <property type="match status" value="1"/>
</dbReference>
<dbReference type="HAMAP" id="MF_00022">
    <property type="entry name" value="Glu_tRNA_synth_type1"/>
    <property type="match status" value="1"/>
</dbReference>
<dbReference type="InterPro" id="IPR045462">
    <property type="entry name" value="aa-tRNA-synth_I_cd-bd"/>
</dbReference>
<dbReference type="InterPro" id="IPR020751">
    <property type="entry name" value="aa-tRNA-synth_I_codon-bd_sub2"/>
</dbReference>
<dbReference type="InterPro" id="IPR001412">
    <property type="entry name" value="aa-tRNA-synth_I_CS"/>
</dbReference>
<dbReference type="InterPro" id="IPR008925">
    <property type="entry name" value="aa_tRNA-synth_I_cd-bd_sf"/>
</dbReference>
<dbReference type="InterPro" id="IPR004527">
    <property type="entry name" value="Glu-tRNA-ligase_bac/mito"/>
</dbReference>
<dbReference type="InterPro" id="IPR000924">
    <property type="entry name" value="Glu/Gln-tRNA-synth"/>
</dbReference>
<dbReference type="InterPro" id="IPR020058">
    <property type="entry name" value="Glu/Gln-tRNA-synth_Ib_cat-dom"/>
</dbReference>
<dbReference type="InterPro" id="IPR049940">
    <property type="entry name" value="GluQ/Sye"/>
</dbReference>
<dbReference type="InterPro" id="IPR033910">
    <property type="entry name" value="GluRS_core"/>
</dbReference>
<dbReference type="InterPro" id="IPR014729">
    <property type="entry name" value="Rossmann-like_a/b/a_fold"/>
</dbReference>
<dbReference type="NCBIfam" id="TIGR00464">
    <property type="entry name" value="gltX_bact"/>
    <property type="match status" value="1"/>
</dbReference>
<dbReference type="PANTHER" id="PTHR43311">
    <property type="entry name" value="GLUTAMATE--TRNA LIGASE"/>
    <property type="match status" value="1"/>
</dbReference>
<dbReference type="PANTHER" id="PTHR43311:SF2">
    <property type="entry name" value="GLUTAMATE--TRNA LIGASE, MITOCHONDRIAL-RELATED"/>
    <property type="match status" value="1"/>
</dbReference>
<dbReference type="Pfam" id="PF19269">
    <property type="entry name" value="Anticodon_2"/>
    <property type="match status" value="1"/>
</dbReference>
<dbReference type="Pfam" id="PF00749">
    <property type="entry name" value="tRNA-synt_1c"/>
    <property type="match status" value="1"/>
</dbReference>
<dbReference type="PRINTS" id="PR00987">
    <property type="entry name" value="TRNASYNTHGLU"/>
</dbReference>
<dbReference type="SUPFAM" id="SSF48163">
    <property type="entry name" value="An anticodon-binding domain of class I aminoacyl-tRNA synthetases"/>
    <property type="match status" value="1"/>
</dbReference>
<dbReference type="SUPFAM" id="SSF52374">
    <property type="entry name" value="Nucleotidylyl transferase"/>
    <property type="match status" value="1"/>
</dbReference>
<dbReference type="PROSITE" id="PS00178">
    <property type="entry name" value="AA_TRNA_LIGASE_I"/>
    <property type="match status" value="1"/>
</dbReference>
<accession>B5EL11</accession>
<reference key="1">
    <citation type="submission" date="2008-08" db="EMBL/GenBank/DDBJ databases">
        <title>Complete sequence of Acidithiobacillus ferrooxidans ATCC 53993.</title>
        <authorList>
            <person name="Lucas S."/>
            <person name="Copeland A."/>
            <person name="Lapidus A."/>
            <person name="Glavina del Rio T."/>
            <person name="Dalin E."/>
            <person name="Tice H."/>
            <person name="Bruce D."/>
            <person name="Goodwin L."/>
            <person name="Pitluck S."/>
            <person name="Sims D."/>
            <person name="Brettin T."/>
            <person name="Detter J.C."/>
            <person name="Han C."/>
            <person name="Kuske C.R."/>
            <person name="Larimer F."/>
            <person name="Land M."/>
            <person name="Hauser L."/>
            <person name="Kyrpides N."/>
            <person name="Lykidis A."/>
            <person name="Borole A.P."/>
        </authorList>
    </citation>
    <scope>NUCLEOTIDE SEQUENCE [LARGE SCALE GENOMIC DNA]</scope>
    <source>
        <strain>ATCC 53993 / BNL-5-31</strain>
    </source>
</reference>
<sequence length="482" mass="52887">MAQYYTTMNLKSRFAPSPTGYLHLGNARTALFAWLAARGAGGTFILRLEDTDQQRSPEIYERALLEDLRWFGIDWDEGPDRGGDHGPYRQMERLAVYGRYYAHLQSSGQAYACYCSADDLAAERAVQRSAGKAPRYGGRCRHLDAAARAEREAAGLLPTLRFRVPDQGTLTVPDLVWGERHYALADLGDFVIRRSDGSPAFFFANAVDDALMEVNLVLRGEDHLTNTPRQILILQALGLPVPAYGHLPLLLGADGQPLSKRYGAASLRDLRKDGYLAAALRNYLARLGHHYSATGFLDSRALAQGFALNQISRAPSHFDMVQLQHWQHEAVQSLDDAAVWNWLAPLLRGKVPMGLEMPFVAAVRANILLPGDALDWAERCFGAPALAADAVEAITGVSPEFWSVAQATLQASGGDYRRWTKALQQASGRRGKALFMPLRAALTGLTHGPELAALLPLIGEERALARLHAAARRPSTPIETTL</sequence>
<feature type="chain" id="PRO_0000367598" description="Glutamate--tRNA ligase 2">
    <location>
        <begin position="1"/>
        <end position="482"/>
    </location>
</feature>
<feature type="short sequence motif" description="'HIGH' region" evidence="1">
    <location>
        <begin position="16"/>
        <end position="26"/>
    </location>
</feature>
<feature type="short sequence motif" description="'KMSKS' region" evidence="1">
    <location>
        <begin position="257"/>
        <end position="261"/>
    </location>
</feature>
<feature type="binding site" evidence="1">
    <location>
        <position position="113"/>
    </location>
    <ligand>
        <name>Zn(2+)</name>
        <dbReference type="ChEBI" id="CHEBI:29105"/>
    </ligand>
</feature>
<feature type="binding site" evidence="1">
    <location>
        <position position="115"/>
    </location>
    <ligand>
        <name>Zn(2+)</name>
        <dbReference type="ChEBI" id="CHEBI:29105"/>
    </ligand>
</feature>
<feature type="binding site" evidence="1">
    <location>
        <position position="140"/>
    </location>
    <ligand>
        <name>Zn(2+)</name>
        <dbReference type="ChEBI" id="CHEBI:29105"/>
    </ligand>
</feature>
<feature type="binding site" evidence="1">
    <location>
        <position position="142"/>
    </location>
    <ligand>
        <name>Zn(2+)</name>
        <dbReference type="ChEBI" id="CHEBI:29105"/>
    </ligand>
</feature>
<feature type="binding site" evidence="1">
    <location>
        <position position="260"/>
    </location>
    <ligand>
        <name>ATP</name>
        <dbReference type="ChEBI" id="CHEBI:30616"/>
    </ligand>
</feature>
<evidence type="ECO:0000255" key="1">
    <source>
        <dbReference type="HAMAP-Rule" id="MF_00022"/>
    </source>
</evidence>
<gene>
    <name evidence="1" type="primary">gltX2</name>
    <name type="ordered locus">Lferr_1876</name>
</gene>
<name>SYE2_ACIF5</name>